<sequence length="616" mass="65652">MALLQISEPGLSAAPHQRRLAAGIDLGTTNSLVATVRSGQAETLADHEGRHLLPSVVHYQQQGHSVGYDARTNAALDTANTISSVKRLMGRSLADIQQRYPHLPYQFQASENGLPMIETAAGLLNPVRVSADILKALAARATEALAGELDGVVITVPAYFDDAQRQGTKDAARLAGLHVLRLLNEPTAAAIAYGLDSGQEGVIAVYDLGGGTFDISILRLSRGVFEVLATGGDSALGGDDFDHLLADYIREQAGIPDRSDNRVQRELLDAAIAAKIALSDADSVTVNVAGWQGEISREQFNELIAPLVKRTLLACRRALKDAGVEADEVLEVVMVGGSTRVPLVRERVGEFFGRPPLTSIDPDKVVAIGAAIQADILVGNKPDSEMLLLDVIPLSLGLETMGGLVEKVIPRNTTIPVARAQDFTTFKDGQTAMSIHVMQGERELVQDCRSLARFALRGIPALPAGGAHIRVTFQVDADGLLSVTAMEKSTGVEASIQVKPSYGLTDSEIASMIKDSMSYAEQDVKARMLAEQKVEAARVLESLHGALAADAALLSAAERQVIDDAAAHLSEVAQGDDVDAIEQAIKNVDKQTQDFAARRMDQSVRRALKGHSVDEV</sequence>
<comment type="function">
    <text evidence="1">Chaperone involved in the maturation of iron-sulfur cluster-containing proteins. Has a low intrinsic ATPase activity which is markedly stimulated by HscB. Involved in the maturation of IscU.</text>
</comment>
<comment type="similarity">
    <text evidence="1">Belongs to the heat shock protein 70 family.</text>
</comment>
<gene>
    <name evidence="1" type="primary">hscA</name>
    <name type="ordered locus">ECH74115_3757</name>
</gene>
<protein>
    <recommendedName>
        <fullName evidence="1">Chaperone protein HscA</fullName>
    </recommendedName>
    <alternativeName>
        <fullName evidence="1">Hsc66</fullName>
    </alternativeName>
</protein>
<accession>B5Z0Z9</accession>
<proteinExistence type="inferred from homology"/>
<keyword id="KW-0067">ATP-binding</keyword>
<keyword id="KW-0143">Chaperone</keyword>
<keyword id="KW-0547">Nucleotide-binding</keyword>
<reference key="1">
    <citation type="journal article" date="2011" name="Proc. Natl. Acad. Sci. U.S.A.">
        <title>Genomic anatomy of Escherichia coli O157:H7 outbreaks.</title>
        <authorList>
            <person name="Eppinger M."/>
            <person name="Mammel M.K."/>
            <person name="Leclerc J.E."/>
            <person name="Ravel J."/>
            <person name="Cebula T.A."/>
        </authorList>
    </citation>
    <scope>NUCLEOTIDE SEQUENCE [LARGE SCALE GENOMIC DNA]</scope>
    <source>
        <strain>EC4115 / EHEC</strain>
    </source>
</reference>
<organism>
    <name type="scientific">Escherichia coli O157:H7 (strain EC4115 / EHEC)</name>
    <dbReference type="NCBI Taxonomy" id="444450"/>
    <lineage>
        <taxon>Bacteria</taxon>
        <taxon>Pseudomonadati</taxon>
        <taxon>Pseudomonadota</taxon>
        <taxon>Gammaproteobacteria</taxon>
        <taxon>Enterobacterales</taxon>
        <taxon>Enterobacteriaceae</taxon>
        <taxon>Escherichia</taxon>
    </lineage>
</organism>
<feature type="chain" id="PRO_1000131673" description="Chaperone protein HscA">
    <location>
        <begin position="1"/>
        <end position="616"/>
    </location>
</feature>
<evidence type="ECO:0000255" key="1">
    <source>
        <dbReference type="HAMAP-Rule" id="MF_00679"/>
    </source>
</evidence>
<name>HSCA_ECO5E</name>
<dbReference type="EMBL" id="CP001164">
    <property type="protein sequence ID" value="ACI36472.1"/>
    <property type="molecule type" value="Genomic_DNA"/>
</dbReference>
<dbReference type="RefSeq" id="WP_001196613.1">
    <property type="nucleotide sequence ID" value="NC_011353.1"/>
</dbReference>
<dbReference type="SMR" id="B5Z0Z9"/>
<dbReference type="GeneID" id="93774610"/>
<dbReference type="KEGG" id="ecf:ECH74115_3757"/>
<dbReference type="HOGENOM" id="CLU_005965_2_1_6"/>
<dbReference type="GO" id="GO:0005524">
    <property type="term" value="F:ATP binding"/>
    <property type="evidence" value="ECO:0007669"/>
    <property type="project" value="UniProtKB-KW"/>
</dbReference>
<dbReference type="GO" id="GO:0016887">
    <property type="term" value="F:ATP hydrolysis activity"/>
    <property type="evidence" value="ECO:0007669"/>
    <property type="project" value="UniProtKB-UniRule"/>
</dbReference>
<dbReference type="GO" id="GO:0140662">
    <property type="term" value="F:ATP-dependent protein folding chaperone"/>
    <property type="evidence" value="ECO:0007669"/>
    <property type="project" value="InterPro"/>
</dbReference>
<dbReference type="GO" id="GO:0051082">
    <property type="term" value="F:unfolded protein binding"/>
    <property type="evidence" value="ECO:0007669"/>
    <property type="project" value="InterPro"/>
</dbReference>
<dbReference type="GO" id="GO:0016226">
    <property type="term" value="P:iron-sulfur cluster assembly"/>
    <property type="evidence" value="ECO:0007669"/>
    <property type="project" value="InterPro"/>
</dbReference>
<dbReference type="CDD" id="cd10236">
    <property type="entry name" value="ASKHA_NBD_HSP70_HscA"/>
    <property type="match status" value="1"/>
</dbReference>
<dbReference type="FunFam" id="1.20.1270.10:FF:000006">
    <property type="entry name" value="Chaperone protein HscA"/>
    <property type="match status" value="1"/>
</dbReference>
<dbReference type="FunFam" id="3.30.420.40:FF:000046">
    <property type="entry name" value="Chaperone protein HscA"/>
    <property type="match status" value="1"/>
</dbReference>
<dbReference type="FunFam" id="3.90.640.10:FF:000013">
    <property type="entry name" value="Chaperone protein HscA"/>
    <property type="match status" value="1"/>
</dbReference>
<dbReference type="FunFam" id="2.60.34.10:FF:000005">
    <property type="entry name" value="Chaperone protein HscA homolog"/>
    <property type="match status" value="1"/>
</dbReference>
<dbReference type="FunFam" id="3.30.420.40:FF:000020">
    <property type="entry name" value="Chaperone protein HscA homolog"/>
    <property type="match status" value="1"/>
</dbReference>
<dbReference type="Gene3D" id="1.20.1270.10">
    <property type="match status" value="1"/>
</dbReference>
<dbReference type="Gene3D" id="3.30.420.40">
    <property type="match status" value="2"/>
</dbReference>
<dbReference type="Gene3D" id="3.90.640.10">
    <property type="entry name" value="Actin, Chain A, domain 4"/>
    <property type="match status" value="1"/>
</dbReference>
<dbReference type="Gene3D" id="2.60.34.10">
    <property type="entry name" value="Substrate Binding Domain Of DNAk, Chain A, domain 1"/>
    <property type="match status" value="1"/>
</dbReference>
<dbReference type="HAMAP" id="MF_00679">
    <property type="entry name" value="HscA"/>
    <property type="match status" value="1"/>
</dbReference>
<dbReference type="InterPro" id="IPR043129">
    <property type="entry name" value="ATPase_NBD"/>
</dbReference>
<dbReference type="InterPro" id="IPR018181">
    <property type="entry name" value="Heat_shock_70_CS"/>
</dbReference>
<dbReference type="InterPro" id="IPR042039">
    <property type="entry name" value="HscA_NBD"/>
</dbReference>
<dbReference type="InterPro" id="IPR029048">
    <property type="entry name" value="HSP70_C_sf"/>
</dbReference>
<dbReference type="InterPro" id="IPR029047">
    <property type="entry name" value="HSP70_peptide-bd_sf"/>
</dbReference>
<dbReference type="InterPro" id="IPR013126">
    <property type="entry name" value="Hsp_70_fam"/>
</dbReference>
<dbReference type="InterPro" id="IPR010236">
    <property type="entry name" value="ISC_FeS_clus_asmbl_HscA"/>
</dbReference>
<dbReference type="NCBIfam" id="TIGR01991">
    <property type="entry name" value="HscA"/>
    <property type="match status" value="1"/>
</dbReference>
<dbReference type="NCBIfam" id="NF003520">
    <property type="entry name" value="PRK05183.1"/>
    <property type="match status" value="1"/>
</dbReference>
<dbReference type="PANTHER" id="PTHR19375">
    <property type="entry name" value="HEAT SHOCK PROTEIN 70KDA"/>
    <property type="match status" value="1"/>
</dbReference>
<dbReference type="Pfam" id="PF00012">
    <property type="entry name" value="HSP70"/>
    <property type="match status" value="1"/>
</dbReference>
<dbReference type="PRINTS" id="PR00301">
    <property type="entry name" value="HEATSHOCK70"/>
</dbReference>
<dbReference type="SUPFAM" id="SSF53067">
    <property type="entry name" value="Actin-like ATPase domain"/>
    <property type="match status" value="2"/>
</dbReference>
<dbReference type="SUPFAM" id="SSF100934">
    <property type="entry name" value="Heat shock protein 70kD (HSP70), C-terminal subdomain"/>
    <property type="match status" value="1"/>
</dbReference>
<dbReference type="SUPFAM" id="SSF100920">
    <property type="entry name" value="Heat shock protein 70kD (HSP70), peptide-binding domain"/>
    <property type="match status" value="1"/>
</dbReference>
<dbReference type="PROSITE" id="PS00297">
    <property type="entry name" value="HSP70_1"/>
    <property type="match status" value="1"/>
</dbReference>
<dbReference type="PROSITE" id="PS00329">
    <property type="entry name" value="HSP70_2"/>
    <property type="match status" value="1"/>
</dbReference>
<dbReference type="PROSITE" id="PS01036">
    <property type="entry name" value="HSP70_3"/>
    <property type="match status" value="1"/>
</dbReference>